<feature type="transit peptide" description="Mitochondrion" evidence="2">
    <location>
        <begin position="1"/>
        <end position="28"/>
    </location>
</feature>
<feature type="chain" id="PRO_0000290588" description="Carbamoyl phosphate synthase arginine-specific small chain" evidence="2">
    <location>
        <begin position="29"/>
        <end position="453"/>
    </location>
</feature>
<feature type="domain" description="Glutamine amidotransferase type-1" evidence="3">
    <location>
        <begin position="219"/>
        <end position="406"/>
    </location>
</feature>
<feature type="active site" description="Nucleophile" evidence="3">
    <location>
        <position position="295"/>
    </location>
</feature>
<feature type="active site" evidence="3">
    <location>
        <position position="379"/>
    </location>
</feature>
<feature type="active site" evidence="3">
    <location>
        <position position="381"/>
    </location>
</feature>
<evidence type="ECO:0000250" key="1">
    <source>
        <dbReference type="UniProtKB" id="P22572"/>
    </source>
</evidence>
<evidence type="ECO:0000255" key="2"/>
<evidence type="ECO:0000255" key="3">
    <source>
        <dbReference type="PROSITE-ProRule" id="PRU00605"/>
    </source>
</evidence>
<evidence type="ECO:0000305" key="4"/>
<reference key="1">
    <citation type="journal article" date="2007" name="Nat. Biotechnol.">
        <title>Genome sequencing and analysis of the versatile cell factory Aspergillus niger CBS 513.88.</title>
        <authorList>
            <person name="Pel H.J."/>
            <person name="de Winde J.H."/>
            <person name="Archer D.B."/>
            <person name="Dyer P.S."/>
            <person name="Hofmann G."/>
            <person name="Schaap P.J."/>
            <person name="Turner G."/>
            <person name="de Vries R.P."/>
            <person name="Albang R."/>
            <person name="Albermann K."/>
            <person name="Andersen M.R."/>
            <person name="Bendtsen J.D."/>
            <person name="Benen J.A.E."/>
            <person name="van den Berg M."/>
            <person name="Breestraat S."/>
            <person name="Caddick M.X."/>
            <person name="Contreras R."/>
            <person name="Cornell M."/>
            <person name="Coutinho P.M."/>
            <person name="Danchin E.G.J."/>
            <person name="Debets A.J.M."/>
            <person name="Dekker P."/>
            <person name="van Dijck P.W.M."/>
            <person name="van Dijk A."/>
            <person name="Dijkhuizen L."/>
            <person name="Driessen A.J.M."/>
            <person name="d'Enfert C."/>
            <person name="Geysens S."/>
            <person name="Goosen C."/>
            <person name="Groot G.S.P."/>
            <person name="de Groot P.W.J."/>
            <person name="Guillemette T."/>
            <person name="Henrissat B."/>
            <person name="Herweijer M."/>
            <person name="van den Hombergh J.P.T.W."/>
            <person name="van den Hondel C.A.M.J.J."/>
            <person name="van der Heijden R.T.J.M."/>
            <person name="van der Kaaij R.M."/>
            <person name="Klis F.M."/>
            <person name="Kools H.J."/>
            <person name="Kubicek C.P."/>
            <person name="van Kuyk P.A."/>
            <person name="Lauber J."/>
            <person name="Lu X."/>
            <person name="van der Maarel M.J.E.C."/>
            <person name="Meulenberg R."/>
            <person name="Menke H."/>
            <person name="Mortimer M.A."/>
            <person name="Nielsen J."/>
            <person name="Oliver S.G."/>
            <person name="Olsthoorn M."/>
            <person name="Pal K."/>
            <person name="van Peij N.N.M.E."/>
            <person name="Ram A.F.J."/>
            <person name="Rinas U."/>
            <person name="Roubos J.A."/>
            <person name="Sagt C.M.J."/>
            <person name="Schmoll M."/>
            <person name="Sun J."/>
            <person name="Ussery D."/>
            <person name="Varga J."/>
            <person name="Vervecken W."/>
            <person name="van de Vondervoort P.J.J."/>
            <person name="Wedler H."/>
            <person name="Woesten H.A.B."/>
            <person name="Zeng A.-P."/>
            <person name="van Ooyen A.J.J."/>
            <person name="Visser J."/>
            <person name="Stam H."/>
        </authorList>
    </citation>
    <scope>NUCLEOTIDE SEQUENCE [LARGE SCALE GENOMIC DNA]</scope>
    <source>
        <strain>ATCC MYA-4892 / CBS 513.88 / FGSC A1513</strain>
    </source>
</reference>
<name>CARA_ASPNC</name>
<gene>
    <name type="primary">cpa1</name>
    <name type="ORF">An17g00820</name>
</gene>
<dbReference type="EC" id="6.3.5.5" evidence="1"/>
<dbReference type="EMBL" id="AM270385">
    <property type="protein sequence ID" value="CAK43010.1"/>
    <property type="molecule type" value="Genomic_DNA"/>
</dbReference>
<dbReference type="RefSeq" id="XP_001398311.1">
    <property type="nucleotide sequence ID" value="XM_001398274.2"/>
</dbReference>
<dbReference type="SMR" id="A2R9B9"/>
<dbReference type="EnsemblFungi" id="CAK43010">
    <property type="protein sequence ID" value="CAK43010"/>
    <property type="gene ID" value="An17g00820"/>
</dbReference>
<dbReference type="GeneID" id="4989405"/>
<dbReference type="KEGG" id="ang:An17g00820"/>
<dbReference type="VEuPathDB" id="FungiDB:An17g00820"/>
<dbReference type="HOGENOM" id="CLU_035901_1_0_1"/>
<dbReference type="UniPathway" id="UPA00068">
    <property type="reaction ID" value="UER00171"/>
</dbReference>
<dbReference type="Proteomes" id="UP000006706">
    <property type="component" value="Chromosome 5L"/>
</dbReference>
<dbReference type="GO" id="GO:0005951">
    <property type="term" value="C:carbamoyl-phosphate synthase complex"/>
    <property type="evidence" value="ECO:0007669"/>
    <property type="project" value="EnsemblFungi"/>
</dbReference>
<dbReference type="GO" id="GO:0005759">
    <property type="term" value="C:mitochondrial matrix"/>
    <property type="evidence" value="ECO:0007669"/>
    <property type="project" value="UniProtKB-SubCell"/>
</dbReference>
<dbReference type="GO" id="GO:0005524">
    <property type="term" value="F:ATP binding"/>
    <property type="evidence" value="ECO:0007669"/>
    <property type="project" value="UniProtKB-KW"/>
</dbReference>
<dbReference type="GO" id="GO:0004088">
    <property type="term" value="F:carbamoyl-phosphate synthase (glutamine-hydrolyzing) activity"/>
    <property type="evidence" value="ECO:0007669"/>
    <property type="project" value="UniProtKB-EC"/>
</dbReference>
<dbReference type="GO" id="GO:0004359">
    <property type="term" value="F:glutaminase activity"/>
    <property type="evidence" value="ECO:0007669"/>
    <property type="project" value="RHEA"/>
</dbReference>
<dbReference type="GO" id="GO:0006207">
    <property type="term" value="P:'de novo' pyrimidine nucleobase biosynthetic process"/>
    <property type="evidence" value="ECO:0007669"/>
    <property type="project" value="InterPro"/>
</dbReference>
<dbReference type="GO" id="GO:0006541">
    <property type="term" value="P:glutamine metabolic process"/>
    <property type="evidence" value="ECO:0007669"/>
    <property type="project" value="InterPro"/>
</dbReference>
<dbReference type="GO" id="GO:0006526">
    <property type="term" value="P:L-arginine biosynthetic process"/>
    <property type="evidence" value="ECO:0007669"/>
    <property type="project" value="UniProtKB-UniPathway"/>
</dbReference>
<dbReference type="GO" id="GO:0006221">
    <property type="term" value="P:pyrimidine nucleotide biosynthetic process"/>
    <property type="evidence" value="ECO:0007669"/>
    <property type="project" value="EnsemblFungi"/>
</dbReference>
<dbReference type="CDD" id="cd01744">
    <property type="entry name" value="GATase1_CPSase"/>
    <property type="match status" value="1"/>
</dbReference>
<dbReference type="FunFam" id="3.40.50.880:FF:000016">
    <property type="entry name" value="Carbamoyl-phosphate synthase arginine-specific small chain"/>
    <property type="match status" value="1"/>
</dbReference>
<dbReference type="FunFam" id="3.50.30.20:FF:000003">
    <property type="entry name" value="Carbamoyl-phosphate synthase arginine-specific small chain"/>
    <property type="match status" value="1"/>
</dbReference>
<dbReference type="Gene3D" id="3.40.50.880">
    <property type="match status" value="1"/>
</dbReference>
<dbReference type="Gene3D" id="3.50.30.20">
    <property type="entry name" value="Carbamoyl-phosphate synthase small subunit, N-terminal domain"/>
    <property type="match status" value="1"/>
</dbReference>
<dbReference type="HAMAP" id="MF_01209">
    <property type="entry name" value="CPSase_S_chain"/>
    <property type="match status" value="1"/>
</dbReference>
<dbReference type="InterPro" id="IPR006274">
    <property type="entry name" value="CarbamoylP_synth_ssu"/>
</dbReference>
<dbReference type="InterPro" id="IPR002474">
    <property type="entry name" value="CarbamoylP_synth_ssu_N"/>
</dbReference>
<dbReference type="InterPro" id="IPR036480">
    <property type="entry name" value="CarbP_synth_ssu_N_sf"/>
</dbReference>
<dbReference type="InterPro" id="IPR029062">
    <property type="entry name" value="Class_I_gatase-like"/>
</dbReference>
<dbReference type="InterPro" id="IPR035686">
    <property type="entry name" value="CPSase_GATase1"/>
</dbReference>
<dbReference type="InterPro" id="IPR017926">
    <property type="entry name" value="GATASE"/>
</dbReference>
<dbReference type="NCBIfam" id="TIGR01368">
    <property type="entry name" value="CPSaseIIsmall"/>
    <property type="match status" value="1"/>
</dbReference>
<dbReference type="NCBIfam" id="NF009475">
    <property type="entry name" value="PRK12838.1"/>
    <property type="match status" value="1"/>
</dbReference>
<dbReference type="PANTHER" id="PTHR11405:SF4">
    <property type="entry name" value="CARBAMOYL-PHOSPHATE SYNTHASE ARGININE-SPECIFIC SMALL CHAIN"/>
    <property type="match status" value="1"/>
</dbReference>
<dbReference type="PANTHER" id="PTHR11405">
    <property type="entry name" value="CARBAMOYLTRANSFERASE FAMILY MEMBER"/>
    <property type="match status" value="1"/>
</dbReference>
<dbReference type="Pfam" id="PF00988">
    <property type="entry name" value="CPSase_sm_chain"/>
    <property type="match status" value="1"/>
</dbReference>
<dbReference type="Pfam" id="PF00117">
    <property type="entry name" value="GATase"/>
    <property type="match status" value="1"/>
</dbReference>
<dbReference type="PRINTS" id="PR00097">
    <property type="entry name" value="ANTSNTHASEII"/>
</dbReference>
<dbReference type="PRINTS" id="PR00099">
    <property type="entry name" value="CPSGATASE"/>
</dbReference>
<dbReference type="PRINTS" id="PR00096">
    <property type="entry name" value="GATASE"/>
</dbReference>
<dbReference type="SMART" id="SM01097">
    <property type="entry name" value="CPSase_sm_chain"/>
    <property type="match status" value="1"/>
</dbReference>
<dbReference type="SUPFAM" id="SSF52021">
    <property type="entry name" value="Carbamoyl phosphate synthetase, small subunit N-terminal domain"/>
    <property type="match status" value="1"/>
</dbReference>
<dbReference type="SUPFAM" id="SSF52317">
    <property type="entry name" value="Class I glutamine amidotransferase-like"/>
    <property type="match status" value="1"/>
</dbReference>
<dbReference type="PROSITE" id="PS51273">
    <property type="entry name" value="GATASE_TYPE_1"/>
    <property type="match status" value="1"/>
</dbReference>
<sequence>MFARVFKAMPARAPAFTSVNASIQSRFMATVRQGRPATERATFTIRDGPIFHGKSFGARSNISGEAVFTTSLVGYPESLTDPSYRGQILVFTQPLIGNYGVPSAERDQHGLLKYFESPNLQAAGVVVADVAEQYSHWTAVESLGEWCAREGVPAISGVDTRAIVTYLREQGSSLARITVGEEYDADQDEAFVDPEQIHLVRQVSTKAPFHVSAADPQCHVAVIDCGVKENILRSLVSRGASITVFPFDYPIHKVAHHFDGVFISNGPGDPTHCQDTVYHLRRLMETSQVPIFGICLGHQLLALANGARTIKLKYGNRAHNIPALDTTTGRCHITSQNHGYAVDASTLPSDWKPYFVNLNDSSNEGMIHKTRPIFSTQFHPEAKGGPLDSSYLFDIYLDSVVKYKNHQLAFHPNRNTVPSPLLVDLLAKERVGVQPTIGMQNVAAAAAAAVAAA</sequence>
<keyword id="KW-0028">Amino-acid biosynthesis</keyword>
<keyword id="KW-0055">Arginine biosynthesis</keyword>
<keyword id="KW-0067">ATP-binding</keyword>
<keyword id="KW-0315">Glutamine amidotransferase</keyword>
<keyword id="KW-0436">Ligase</keyword>
<keyword id="KW-0496">Mitochondrion</keyword>
<keyword id="KW-0547">Nucleotide-binding</keyword>
<keyword id="KW-1185">Reference proteome</keyword>
<keyword id="KW-0809">Transit peptide</keyword>
<proteinExistence type="inferred from homology"/>
<organism>
    <name type="scientific">Aspergillus niger (strain ATCC MYA-4892 / CBS 513.88 / FGSC A1513)</name>
    <dbReference type="NCBI Taxonomy" id="425011"/>
    <lineage>
        <taxon>Eukaryota</taxon>
        <taxon>Fungi</taxon>
        <taxon>Dikarya</taxon>
        <taxon>Ascomycota</taxon>
        <taxon>Pezizomycotina</taxon>
        <taxon>Eurotiomycetes</taxon>
        <taxon>Eurotiomycetidae</taxon>
        <taxon>Eurotiales</taxon>
        <taxon>Aspergillaceae</taxon>
        <taxon>Aspergillus</taxon>
        <taxon>Aspergillus subgen. Circumdati</taxon>
    </lineage>
</organism>
<comment type="function">
    <text evidence="1">Small subunit of the arginine-specific carbamoyl phosphate synthase (CPSase). CPSase catalyzes the formation of carbamoyl phosphate from the ammonia moiety of glutamine, carbonate, and phosphate donated by ATP, the first step of the arginine biosynthetic pathway. The small subunit (glutamine amidotransferase) binds and cleaves glutamine to supply the large subunit with the substrate ammonia.</text>
</comment>
<comment type="catalytic activity">
    <reaction evidence="1">
        <text>hydrogencarbonate + L-glutamine + 2 ATP + H2O = carbamoyl phosphate + L-glutamate + 2 ADP + phosphate + 2 H(+)</text>
        <dbReference type="Rhea" id="RHEA:18633"/>
        <dbReference type="ChEBI" id="CHEBI:15377"/>
        <dbReference type="ChEBI" id="CHEBI:15378"/>
        <dbReference type="ChEBI" id="CHEBI:17544"/>
        <dbReference type="ChEBI" id="CHEBI:29985"/>
        <dbReference type="ChEBI" id="CHEBI:30616"/>
        <dbReference type="ChEBI" id="CHEBI:43474"/>
        <dbReference type="ChEBI" id="CHEBI:58228"/>
        <dbReference type="ChEBI" id="CHEBI:58359"/>
        <dbReference type="ChEBI" id="CHEBI:456216"/>
        <dbReference type="EC" id="6.3.5.5"/>
    </reaction>
</comment>
<comment type="catalytic activity">
    <molecule>Carbamoyl phosphate synthase arginine-specific small chain</molecule>
    <reaction evidence="1">
        <text>L-glutamine + H2O = L-glutamate + NH4(+)</text>
        <dbReference type="Rhea" id="RHEA:15889"/>
        <dbReference type="ChEBI" id="CHEBI:15377"/>
        <dbReference type="ChEBI" id="CHEBI:28938"/>
        <dbReference type="ChEBI" id="CHEBI:29985"/>
        <dbReference type="ChEBI" id="CHEBI:58359"/>
    </reaction>
</comment>
<comment type="pathway">
    <text evidence="1">Amino-acid biosynthesis; L-arginine biosynthesis; carbamoyl phosphate from bicarbonate: step 1/1.</text>
</comment>
<comment type="subunit">
    <text evidence="1">Heterodimer composed of 2 chains; the small (or glutamine) chain promotes the hydrolysis of glutamine to ammonia, which is used by the large (or ammonia) chain to synthesize carbamoyl phosphate.</text>
</comment>
<comment type="subcellular location">
    <subcellularLocation>
        <location evidence="1">Mitochondrion matrix</location>
    </subcellularLocation>
</comment>
<comment type="similarity">
    <text evidence="4">Belongs to the CarA family.</text>
</comment>
<accession>A2R9B9</accession>
<protein>
    <recommendedName>
        <fullName>Carbamoyl phosphate synthase arginine-specific small chain</fullName>
        <shortName>CPS</shortName>
        <shortName>CPSase</shortName>
        <ecNumber evidence="1">6.3.5.5</ecNumber>
    </recommendedName>
    <alternativeName>
        <fullName>Arginine-specific carbamoyl phosphate synthetase, glutamine chain</fullName>
    </alternativeName>
    <alternativeName>
        <fullName>Glutamine-dependent carbamoyl phosphate synthetase</fullName>
    </alternativeName>
</protein>